<protein>
    <recommendedName>
        <fullName>Uncharacterized protein YqaM</fullName>
    </recommendedName>
</protein>
<reference key="1">
    <citation type="journal article" date="1995" name="Microbiology">
        <title>Complete nucleotide sequence of a skin element excised by DNA rearrangement during sporulation in Bacillus subtilis.</title>
        <authorList>
            <person name="Takemaru K."/>
            <person name="Mizuno M."/>
            <person name="Sato T."/>
            <person name="Takeuchi M."/>
            <person name="Kobayashi Y."/>
        </authorList>
    </citation>
    <scope>NUCLEOTIDE SEQUENCE [GENOMIC DNA]</scope>
    <source>
        <strain>168 / JH642</strain>
    </source>
</reference>
<reference key="2">
    <citation type="journal article" date="1996" name="Microbiology">
        <title>Systematic sequencing of the 283 kb 210 degrees-232 degrees region of the Bacillus subtilis genome containing the skin element and many sporulation genes.</title>
        <authorList>
            <person name="Mizuno M."/>
            <person name="Masuda S."/>
            <person name="Takemaru K."/>
            <person name="Hosono S."/>
            <person name="Sato T."/>
            <person name="Takeuchi M."/>
            <person name="Kobayashi Y."/>
        </authorList>
    </citation>
    <scope>NUCLEOTIDE SEQUENCE [GENOMIC DNA]</scope>
    <source>
        <strain>168 / JH642</strain>
    </source>
</reference>
<reference key="3">
    <citation type="journal article" date="1997" name="Nature">
        <title>The complete genome sequence of the Gram-positive bacterium Bacillus subtilis.</title>
        <authorList>
            <person name="Kunst F."/>
            <person name="Ogasawara N."/>
            <person name="Moszer I."/>
            <person name="Albertini A.M."/>
            <person name="Alloni G."/>
            <person name="Azevedo V."/>
            <person name="Bertero M.G."/>
            <person name="Bessieres P."/>
            <person name="Bolotin A."/>
            <person name="Borchert S."/>
            <person name="Borriss R."/>
            <person name="Boursier L."/>
            <person name="Brans A."/>
            <person name="Braun M."/>
            <person name="Brignell S.C."/>
            <person name="Bron S."/>
            <person name="Brouillet S."/>
            <person name="Bruschi C.V."/>
            <person name="Caldwell B."/>
            <person name="Capuano V."/>
            <person name="Carter N.M."/>
            <person name="Choi S.-K."/>
            <person name="Codani J.-J."/>
            <person name="Connerton I.F."/>
            <person name="Cummings N.J."/>
            <person name="Daniel R.A."/>
            <person name="Denizot F."/>
            <person name="Devine K.M."/>
            <person name="Duesterhoeft A."/>
            <person name="Ehrlich S.D."/>
            <person name="Emmerson P.T."/>
            <person name="Entian K.-D."/>
            <person name="Errington J."/>
            <person name="Fabret C."/>
            <person name="Ferrari E."/>
            <person name="Foulger D."/>
            <person name="Fritz C."/>
            <person name="Fujita M."/>
            <person name="Fujita Y."/>
            <person name="Fuma S."/>
            <person name="Galizzi A."/>
            <person name="Galleron N."/>
            <person name="Ghim S.-Y."/>
            <person name="Glaser P."/>
            <person name="Goffeau A."/>
            <person name="Golightly E.J."/>
            <person name="Grandi G."/>
            <person name="Guiseppi G."/>
            <person name="Guy B.J."/>
            <person name="Haga K."/>
            <person name="Haiech J."/>
            <person name="Harwood C.R."/>
            <person name="Henaut A."/>
            <person name="Hilbert H."/>
            <person name="Holsappel S."/>
            <person name="Hosono S."/>
            <person name="Hullo M.-F."/>
            <person name="Itaya M."/>
            <person name="Jones L.-M."/>
            <person name="Joris B."/>
            <person name="Karamata D."/>
            <person name="Kasahara Y."/>
            <person name="Klaerr-Blanchard M."/>
            <person name="Klein C."/>
            <person name="Kobayashi Y."/>
            <person name="Koetter P."/>
            <person name="Koningstein G."/>
            <person name="Krogh S."/>
            <person name="Kumano M."/>
            <person name="Kurita K."/>
            <person name="Lapidus A."/>
            <person name="Lardinois S."/>
            <person name="Lauber J."/>
            <person name="Lazarevic V."/>
            <person name="Lee S.-M."/>
            <person name="Levine A."/>
            <person name="Liu H."/>
            <person name="Masuda S."/>
            <person name="Mauel C."/>
            <person name="Medigue C."/>
            <person name="Medina N."/>
            <person name="Mellado R.P."/>
            <person name="Mizuno M."/>
            <person name="Moestl D."/>
            <person name="Nakai S."/>
            <person name="Noback M."/>
            <person name="Noone D."/>
            <person name="O'Reilly M."/>
            <person name="Ogawa K."/>
            <person name="Ogiwara A."/>
            <person name="Oudega B."/>
            <person name="Park S.-H."/>
            <person name="Parro V."/>
            <person name="Pohl T.M."/>
            <person name="Portetelle D."/>
            <person name="Porwollik S."/>
            <person name="Prescott A.M."/>
            <person name="Presecan E."/>
            <person name="Pujic P."/>
            <person name="Purnelle B."/>
            <person name="Rapoport G."/>
            <person name="Rey M."/>
            <person name="Reynolds S."/>
            <person name="Rieger M."/>
            <person name="Rivolta C."/>
            <person name="Rocha E."/>
            <person name="Roche B."/>
            <person name="Rose M."/>
            <person name="Sadaie Y."/>
            <person name="Sato T."/>
            <person name="Scanlan E."/>
            <person name="Schleich S."/>
            <person name="Schroeter R."/>
            <person name="Scoffone F."/>
            <person name="Sekiguchi J."/>
            <person name="Sekowska A."/>
            <person name="Seror S.J."/>
            <person name="Serror P."/>
            <person name="Shin B.-S."/>
            <person name="Soldo B."/>
            <person name="Sorokin A."/>
            <person name="Tacconi E."/>
            <person name="Takagi T."/>
            <person name="Takahashi H."/>
            <person name="Takemaru K."/>
            <person name="Takeuchi M."/>
            <person name="Tamakoshi A."/>
            <person name="Tanaka T."/>
            <person name="Terpstra P."/>
            <person name="Tognoni A."/>
            <person name="Tosato V."/>
            <person name="Uchiyama S."/>
            <person name="Vandenbol M."/>
            <person name="Vannier F."/>
            <person name="Vassarotti A."/>
            <person name="Viari A."/>
            <person name="Wambutt R."/>
            <person name="Wedler E."/>
            <person name="Wedler H."/>
            <person name="Weitzenegger T."/>
            <person name="Winters P."/>
            <person name="Wipat A."/>
            <person name="Yamamoto H."/>
            <person name="Yamane K."/>
            <person name="Yasumoto K."/>
            <person name="Yata K."/>
            <person name="Yoshida K."/>
            <person name="Yoshikawa H.-F."/>
            <person name="Zumstein E."/>
            <person name="Yoshikawa H."/>
            <person name="Danchin A."/>
        </authorList>
    </citation>
    <scope>NUCLEOTIDE SEQUENCE [LARGE SCALE GENOMIC DNA]</scope>
    <source>
        <strain>168</strain>
    </source>
</reference>
<reference key="4">
    <citation type="journal article" date="1995" name="Gene">
        <title>Analysis of a Bacillus subtilis genome fragment using a co-operative computer system prototype.</title>
        <authorList>
            <person name="Medigue C."/>
            <person name="Moszer I."/>
            <person name="Viari A."/>
            <person name="Danchin A."/>
        </authorList>
    </citation>
    <scope>IDENTIFICATION</scope>
</reference>
<proteinExistence type="predicted"/>
<name>YQAM_BACSU</name>
<dbReference type="EMBL" id="D32216">
    <property type="protein sequence ID" value="BAA06927.1"/>
    <property type="molecule type" value="Genomic_DNA"/>
</dbReference>
<dbReference type="EMBL" id="D84432">
    <property type="protein sequence ID" value="BAA12388.1"/>
    <property type="molecule type" value="Genomic_DNA"/>
</dbReference>
<dbReference type="EMBL" id="AL009126">
    <property type="protein sequence ID" value="CAB14567.3"/>
    <property type="molecule type" value="Genomic_DNA"/>
</dbReference>
<dbReference type="PIR" id="D69945">
    <property type="entry name" value="D69945"/>
</dbReference>
<dbReference type="RefSeq" id="NP_390503.2">
    <property type="nucleotide sequence ID" value="NC_000964.3"/>
</dbReference>
<dbReference type="RefSeq" id="WP_075058863.1">
    <property type="nucleotide sequence ID" value="NZ_OZ025638.1"/>
</dbReference>
<dbReference type="SMR" id="P45910"/>
<dbReference type="FunCoup" id="P45910">
    <property type="interactions" value="96"/>
</dbReference>
<dbReference type="IntAct" id="P45910">
    <property type="interactions" value="1"/>
</dbReference>
<dbReference type="STRING" id="224308.BSU26260"/>
<dbReference type="PaxDb" id="224308-BSU26260"/>
<dbReference type="EnsemblBacteria" id="CAB14567">
    <property type="protein sequence ID" value="CAB14567"/>
    <property type="gene ID" value="BSU_26260"/>
</dbReference>
<dbReference type="GeneID" id="937685"/>
<dbReference type="KEGG" id="bsu:BSU26260"/>
<dbReference type="eggNOG" id="COG1484">
    <property type="taxonomic scope" value="Bacteria"/>
</dbReference>
<dbReference type="InParanoid" id="P45910"/>
<dbReference type="OrthoDB" id="1655960at2"/>
<dbReference type="BioCyc" id="BSUB:BSU26260-MONOMER"/>
<dbReference type="Proteomes" id="UP000001570">
    <property type="component" value="Chromosome"/>
</dbReference>
<dbReference type="GO" id="GO:0016887">
    <property type="term" value="F:ATP hydrolysis activity"/>
    <property type="evidence" value="ECO:0007669"/>
    <property type="project" value="InterPro"/>
</dbReference>
<dbReference type="GO" id="GO:0006260">
    <property type="term" value="P:DNA replication"/>
    <property type="evidence" value="ECO:0000318"/>
    <property type="project" value="GO_Central"/>
</dbReference>
<dbReference type="CDD" id="cd00009">
    <property type="entry name" value="AAA"/>
    <property type="match status" value="1"/>
</dbReference>
<dbReference type="FunFam" id="3.40.50.300:FF:002497">
    <property type="entry name" value="DNA replication protein"/>
    <property type="match status" value="1"/>
</dbReference>
<dbReference type="Gene3D" id="3.40.50.300">
    <property type="entry name" value="P-loop containing nucleotide triphosphate hydrolases"/>
    <property type="match status" value="1"/>
</dbReference>
<dbReference type="InterPro" id="IPR003593">
    <property type="entry name" value="AAA+_ATPase"/>
</dbReference>
<dbReference type="InterPro" id="IPR013317">
    <property type="entry name" value="DnaA_dom"/>
</dbReference>
<dbReference type="InterPro" id="IPR027417">
    <property type="entry name" value="P-loop_NTPase"/>
</dbReference>
<dbReference type="NCBIfam" id="NF005378">
    <property type="entry name" value="PRK06921.1"/>
    <property type="match status" value="1"/>
</dbReference>
<dbReference type="PANTHER" id="PTHR30050">
    <property type="entry name" value="CHROMOSOMAL REPLICATION INITIATOR PROTEIN DNAA"/>
    <property type="match status" value="1"/>
</dbReference>
<dbReference type="PANTHER" id="PTHR30050:SF10">
    <property type="entry name" value="PHAGE-LIKE ELEMENT PBSX PROTEIN XKDC"/>
    <property type="match status" value="1"/>
</dbReference>
<dbReference type="Pfam" id="PF00308">
    <property type="entry name" value="Bac_DnaA"/>
    <property type="match status" value="1"/>
</dbReference>
<dbReference type="SMART" id="SM00382">
    <property type="entry name" value="AAA"/>
    <property type="match status" value="1"/>
</dbReference>
<dbReference type="SUPFAM" id="SSF52540">
    <property type="entry name" value="P-loop containing nucleoside triphosphate hydrolases"/>
    <property type="match status" value="1"/>
</dbReference>
<feature type="chain" id="PRO_0000049744" description="Uncharacterized protein YqaM">
    <location>
        <begin position="1"/>
        <end position="313"/>
    </location>
</feature>
<sequence>MAINKAVSIDTAFQTIMQELRERSARFLGTKQAVSEEKAEFDCPYCKDRGIVVYRVHKDTSWHLDEQLDLMVPDDMVSEDDFLLGKVCTPDKASEWKDTYSKQCECVRRKKIARLMAASGITEEFEKLLFGNFITDGKPDMIKDAYECAVEYYKDFQKIKGERQNSIALLGQPGSGKTHLLTAIMNNLIKKKSVHCMYFPYVEGMGDLKANFDNLEAKLDAMRKVEVLFIDDLFKPINGQPRATDWQVEQIQSVLNYRYLNHKPLLISSELTIDEILDIDEALGSRIHQMCRDYIVIIRGDRMQLNHRLGDWE</sequence>
<gene>
    <name type="primary">yqaM</name>
    <name type="ordered locus">BSU26260</name>
</gene>
<accession>P45910</accession>
<keyword id="KW-1185">Reference proteome</keyword>
<organism>
    <name type="scientific">Bacillus subtilis (strain 168)</name>
    <dbReference type="NCBI Taxonomy" id="224308"/>
    <lineage>
        <taxon>Bacteria</taxon>
        <taxon>Bacillati</taxon>
        <taxon>Bacillota</taxon>
        <taxon>Bacilli</taxon>
        <taxon>Bacillales</taxon>
        <taxon>Bacillaceae</taxon>
        <taxon>Bacillus</taxon>
    </lineage>
</organism>
<evidence type="ECO:0000305" key="1"/>
<comment type="similarity">
    <text evidence="1">To B.subtilis YqxC and T.hyodysenteriae hemolysin TlyA.</text>
</comment>